<gene>
    <name evidence="1" type="primary">frr</name>
    <name type="ordered locus">BCAH820_3836</name>
</gene>
<accession>B7JJA2</accession>
<proteinExistence type="inferred from homology"/>
<name>RRF_BACC0</name>
<comment type="function">
    <text evidence="1">Responsible for the release of ribosomes from messenger RNA at the termination of protein biosynthesis. May increase the efficiency of translation by recycling ribosomes from one round of translation to another.</text>
</comment>
<comment type="subcellular location">
    <subcellularLocation>
        <location evidence="1">Cytoplasm</location>
    </subcellularLocation>
</comment>
<comment type="similarity">
    <text evidence="1">Belongs to the RRF family.</text>
</comment>
<protein>
    <recommendedName>
        <fullName evidence="1">Ribosome-recycling factor</fullName>
        <shortName evidence="1">RRF</shortName>
    </recommendedName>
    <alternativeName>
        <fullName evidence="1">Ribosome-releasing factor</fullName>
    </alternativeName>
</protein>
<organism>
    <name type="scientific">Bacillus cereus (strain AH820)</name>
    <dbReference type="NCBI Taxonomy" id="405535"/>
    <lineage>
        <taxon>Bacteria</taxon>
        <taxon>Bacillati</taxon>
        <taxon>Bacillota</taxon>
        <taxon>Bacilli</taxon>
        <taxon>Bacillales</taxon>
        <taxon>Bacillaceae</taxon>
        <taxon>Bacillus</taxon>
        <taxon>Bacillus cereus group</taxon>
    </lineage>
</organism>
<reference key="1">
    <citation type="submission" date="2008-10" db="EMBL/GenBank/DDBJ databases">
        <title>Genome sequence of Bacillus cereus AH820.</title>
        <authorList>
            <person name="Dodson R.J."/>
            <person name="Durkin A.S."/>
            <person name="Rosovitz M.J."/>
            <person name="Rasko D.A."/>
            <person name="Hoffmaster A."/>
            <person name="Ravel J."/>
            <person name="Sutton G."/>
        </authorList>
    </citation>
    <scope>NUCLEOTIDE SEQUENCE [LARGE SCALE GENOMIC DNA]</scope>
    <source>
        <strain>AH820</strain>
    </source>
</reference>
<keyword id="KW-0963">Cytoplasm</keyword>
<keyword id="KW-0648">Protein biosynthesis</keyword>
<evidence type="ECO:0000255" key="1">
    <source>
        <dbReference type="HAMAP-Rule" id="MF_00040"/>
    </source>
</evidence>
<sequence>MGQQVLKSSNEKMEKAVAAYSRELATVRAGRASASVLDKVQVDYYGAPTPVVQLANITVPEARLLVIQPYDKTSIGDIEKAILKADLGLNPSNDGTVIRIAFPALTEERRRDLVKVVKKYAEEAKVAVRNVRRDGNDDLKKLEKAGEITEDDLRGYTEDIQKETDKYIAKVDEIAKNKEKEIMEV</sequence>
<feature type="chain" id="PRO_1000194897" description="Ribosome-recycling factor">
    <location>
        <begin position="1"/>
        <end position="185"/>
    </location>
</feature>
<dbReference type="EMBL" id="CP001283">
    <property type="protein sequence ID" value="ACK87641.1"/>
    <property type="molecule type" value="Genomic_DNA"/>
</dbReference>
<dbReference type="RefSeq" id="WP_000531503.1">
    <property type="nucleotide sequence ID" value="NC_011773.1"/>
</dbReference>
<dbReference type="SMR" id="B7JJA2"/>
<dbReference type="KEGG" id="bcu:BCAH820_3836"/>
<dbReference type="HOGENOM" id="CLU_073981_2_0_9"/>
<dbReference type="Proteomes" id="UP000001363">
    <property type="component" value="Chromosome"/>
</dbReference>
<dbReference type="GO" id="GO:0005737">
    <property type="term" value="C:cytoplasm"/>
    <property type="evidence" value="ECO:0007669"/>
    <property type="project" value="UniProtKB-SubCell"/>
</dbReference>
<dbReference type="GO" id="GO:0043023">
    <property type="term" value="F:ribosomal large subunit binding"/>
    <property type="evidence" value="ECO:0007669"/>
    <property type="project" value="TreeGrafter"/>
</dbReference>
<dbReference type="GO" id="GO:0006415">
    <property type="term" value="P:translational termination"/>
    <property type="evidence" value="ECO:0007669"/>
    <property type="project" value="UniProtKB-UniRule"/>
</dbReference>
<dbReference type="CDD" id="cd00520">
    <property type="entry name" value="RRF"/>
    <property type="match status" value="1"/>
</dbReference>
<dbReference type="FunFam" id="1.10.132.20:FF:000001">
    <property type="entry name" value="Ribosome-recycling factor"/>
    <property type="match status" value="1"/>
</dbReference>
<dbReference type="FunFam" id="3.30.1360.40:FF:000001">
    <property type="entry name" value="Ribosome-recycling factor"/>
    <property type="match status" value="1"/>
</dbReference>
<dbReference type="Gene3D" id="3.30.1360.40">
    <property type="match status" value="1"/>
</dbReference>
<dbReference type="Gene3D" id="1.10.132.20">
    <property type="entry name" value="Ribosome-recycling factor"/>
    <property type="match status" value="1"/>
</dbReference>
<dbReference type="HAMAP" id="MF_00040">
    <property type="entry name" value="RRF"/>
    <property type="match status" value="1"/>
</dbReference>
<dbReference type="InterPro" id="IPR002661">
    <property type="entry name" value="Ribosome_recyc_fac"/>
</dbReference>
<dbReference type="InterPro" id="IPR023584">
    <property type="entry name" value="Ribosome_recyc_fac_dom"/>
</dbReference>
<dbReference type="InterPro" id="IPR036191">
    <property type="entry name" value="RRF_sf"/>
</dbReference>
<dbReference type="NCBIfam" id="TIGR00496">
    <property type="entry name" value="frr"/>
    <property type="match status" value="1"/>
</dbReference>
<dbReference type="PANTHER" id="PTHR20982:SF3">
    <property type="entry name" value="MITOCHONDRIAL RIBOSOME RECYCLING FACTOR PSEUDO 1"/>
    <property type="match status" value="1"/>
</dbReference>
<dbReference type="PANTHER" id="PTHR20982">
    <property type="entry name" value="RIBOSOME RECYCLING FACTOR"/>
    <property type="match status" value="1"/>
</dbReference>
<dbReference type="Pfam" id="PF01765">
    <property type="entry name" value="RRF"/>
    <property type="match status" value="1"/>
</dbReference>
<dbReference type="SUPFAM" id="SSF55194">
    <property type="entry name" value="Ribosome recycling factor, RRF"/>
    <property type="match status" value="1"/>
</dbReference>